<feature type="chain" id="PRO_0000414580" description="Multidrug resistance protein MdtG">
    <location>
        <begin position="1"/>
        <end position="412"/>
    </location>
</feature>
<feature type="transmembrane region" description="Helical" evidence="1">
    <location>
        <begin position="19"/>
        <end position="39"/>
    </location>
</feature>
<feature type="transmembrane region" description="Helical" evidence="1">
    <location>
        <begin position="56"/>
        <end position="76"/>
    </location>
</feature>
<feature type="transmembrane region" description="Helical" evidence="1">
    <location>
        <begin position="90"/>
        <end position="110"/>
    </location>
</feature>
<feature type="transmembrane region" description="Helical" evidence="1">
    <location>
        <begin position="113"/>
        <end position="133"/>
    </location>
</feature>
<feature type="transmembrane region" description="Helical" evidence="1">
    <location>
        <begin position="144"/>
        <end position="164"/>
    </location>
</feature>
<feature type="transmembrane region" description="Helical" evidence="1">
    <location>
        <begin position="171"/>
        <end position="191"/>
    </location>
</feature>
<feature type="transmembrane region" description="Helical" evidence="1">
    <location>
        <begin position="222"/>
        <end position="242"/>
    </location>
</feature>
<feature type="transmembrane region" description="Helical" evidence="1">
    <location>
        <begin position="254"/>
        <end position="274"/>
    </location>
</feature>
<feature type="transmembrane region" description="Helical" evidence="1">
    <location>
        <begin position="288"/>
        <end position="308"/>
    </location>
</feature>
<feature type="transmembrane region" description="Helical" evidence="1">
    <location>
        <begin position="317"/>
        <end position="337"/>
    </location>
</feature>
<feature type="transmembrane region" description="Helical" evidence="1">
    <location>
        <begin position="376"/>
        <end position="396"/>
    </location>
</feature>
<protein>
    <recommendedName>
        <fullName evidence="1">Multidrug resistance protein MdtG</fullName>
    </recommendedName>
</protein>
<keyword id="KW-0997">Cell inner membrane</keyword>
<keyword id="KW-1003">Cell membrane</keyword>
<keyword id="KW-0472">Membrane</keyword>
<keyword id="KW-0812">Transmembrane</keyword>
<keyword id="KW-1133">Transmembrane helix</keyword>
<keyword id="KW-0813">Transport</keyword>
<gene>
    <name evidence="1" type="primary">mdtG</name>
    <name type="ordered locus">KPK_3490</name>
</gene>
<name>MDTG_KLEP3</name>
<dbReference type="EMBL" id="CP000964">
    <property type="protein sequence ID" value="ACI11362.1"/>
    <property type="molecule type" value="Genomic_DNA"/>
</dbReference>
<dbReference type="SMR" id="B5XXK2"/>
<dbReference type="KEGG" id="kpe:KPK_3490"/>
<dbReference type="HOGENOM" id="CLU_001265_57_3_6"/>
<dbReference type="Proteomes" id="UP000001734">
    <property type="component" value="Chromosome"/>
</dbReference>
<dbReference type="GO" id="GO:0005886">
    <property type="term" value="C:plasma membrane"/>
    <property type="evidence" value="ECO:0007669"/>
    <property type="project" value="UniProtKB-SubCell"/>
</dbReference>
<dbReference type="GO" id="GO:0022857">
    <property type="term" value="F:transmembrane transporter activity"/>
    <property type="evidence" value="ECO:0007669"/>
    <property type="project" value="UniProtKB-UniRule"/>
</dbReference>
<dbReference type="CDD" id="cd17391">
    <property type="entry name" value="MFS_MdtG_MDR_like"/>
    <property type="match status" value="1"/>
</dbReference>
<dbReference type="FunFam" id="1.20.1250.20:FF:000020">
    <property type="entry name" value="Multidrug resistance protein MdtG"/>
    <property type="match status" value="1"/>
</dbReference>
<dbReference type="FunFam" id="1.20.1250.20:FF:000022">
    <property type="entry name" value="Multidrug resistance protein MdtG"/>
    <property type="match status" value="1"/>
</dbReference>
<dbReference type="Gene3D" id="1.20.1250.20">
    <property type="entry name" value="MFS general substrate transporter like domains"/>
    <property type="match status" value="2"/>
</dbReference>
<dbReference type="HAMAP" id="MF_01528">
    <property type="entry name" value="MFS_MdtG"/>
    <property type="match status" value="1"/>
</dbReference>
<dbReference type="InterPro" id="IPR011701">
    <property type="entry name" value="MFS"/>
</dbReference>
<dbReference type="InterPro" id="IPR020846">
    <property type="entry name" value="MFS_dom"/>
</dbReference>
<dbReference type="InterPro" id="IPR050497">
    <property type="entry name" value="MFS_MdtG_subfamily"/>
</dbReference>
<dbReference type="InterPro" id="IPR005828">
    <property type="entry name" value="MFS_sugar_transport-like"/>
</dbReference>
<dbReference type="InterPro" id="IPR036259">
    <property type="entry name" value="MFS_trans_sf"/>
</dbReference>
<dbReference type="InterPro" id="IPR023692">
    <property type="entry name" value="Mutidrug-R_MdtG"/>
</dbReference>
<dbReference type="InterPro" id="IPR001958">
    <property type="entry name" value="Tet-R_TetA/multi-R_MdtG-like"/>
</dbReference>
<dbReference type="NCBIfam" id="NF007372">
    <property type="entry name" value="PRK09874.1"/>
    <property type="match status" value="1"/>
</dbReference>
<dbReference type="PANTHER" id="PTHR43414">
    <property type="entry name" value="MULTIDRUG RESISTANCE PROTEIN MDTG"/>
    <property type="match status" value="1"/>
</dbReference>
<dbReference type="PANTHER" id="PTHR43414:SF6">
    <property type="entry name" value="MULTIDRUG RESISTANCE PROTEIN MDTG"/>
    <property type="match status" value="1"/>
</dbReference>
<dbReference type="Pfam" id="PF07690">
    <property type="entry name" value="MFS_1"/>
    <property type="match status" value="1"/>
</dbReference>
<dbReference type="Pfam" id="PF00083">
    <property type="entry name" value="Sugar_tr"/>
    <property type="match status" value="1"/>
</dbReference>
<dbReference type="PRINTS" id="PR01035">
    <property type="entry name" value="TCRTETA"/>
</dbReference>
<dbReference type="SUPFAM" id="SSF103473">
    <property type="entry name" value="MFS general substrate transporter"/>
    <property type="match status" value="1"/>
</dbReference>
<dbReference type="PROSITE" id="PS50850">
    <property type="entry name" value="MFS"/>
    <property type="match status" value="1"/>
</dbReference>
<organism>
    <name type="scientific">Klebsiella pneumoniae (strain 342)</name>
    <dbReference type="NCBI Taxonomy" id="507522"/>
    <lineage>
        <taxon>Bacteria</taxon>
        <taxon>Pseudomonadati</taxon>
        <taxon>Pseudomonadota</taxon>
        <taxon>Gammaproteobacteria</taxon>
        <taxon>Enterobacterales</taxon>
        <taxon>Enterobacteriaceae</taxon>
        <taxon>Klebsiella/Raoultella group</taxon>
        <taxon>Klebsiella</taxon>
        <taxon>Klebsiella pneumoniae complex</taxon>
    </lineage>
</organism>
<accession>B5XXK2</accession>
<proteinExistence type="inferred from homology"/>
<comment type="subcellular location">
    <subcellularLocation>
        <location evidence="1">Cell inner membrane</location>
        <topology evidence="1">Multi-pass membrane protein</topology>
    </subcellularLocation>
</comment>
<comment type="similarity">
    <text evidence="1">Belongs to the major facilitator superfamily. DHA1 family. MdtG (TC 2.A.1.2.20) subfamily.</text>
</comment>
<sequence length="412" mass="44153">MSSADTPINWKQNLTVTWLGCFLTGAAFSLVMPFLPLYVEQLGVTGHSALNMWSGLVFSITFLFSAIASPFWGGLADRKGRKIMLLRSALGMSVVMMLMGMAQNIWQFLLLRALLGLLGGFIPNANALIATQIPRHKSGWALGTLSTGAVSGALLGPLAGGFLADHWGLRTVFFMTAAVLFICFLFTLFLIRENFVPIAKKEMLSAREVFSSLQNPKLVLSLFVTSLIIQVATGSIAPILTLYVRDLAGNVSNIAFISGMIASVPGIAALMSAPRLGRLGDRIGPEKILIVALIISVLLLIPMSFVQTPLQLGILRFLLGAADGALLPAVQTLLVYNSTSQISGRIFSYNQSFRDIGNVTGPLIGASVSANYGFRAVFLVTAGVVLFNAIYSTLSLRRPAAEASQPDRHSVN</sequence>
<evidence type="ECO:0000255" key="1">
    <source>
        <dbReference type="HAMAP-Rule" id="MF_01528"/>
    </source>
</evidence>
<reference key="1">
    <citation type="journal article" date="2008" name="PLoS Genet.">
        <title>Complete genome sequence of the N2-fixing broad host range endophyte Klebsiella pneumoniae 342 and virulence predictions verified in mice.</title>
        <authorList>
            <person name="Fouts D.E."/>
            <person name="Tyler H.L."/>
            <person name="DeBoy R.T."/>
            <person name="Daugherty S."/>
            <person name="Ren Q."/>
            <person name="Badger J.H."/>
            <person name="Durkin A.S."/>
            <person name="Huot H."/>
            <person name="Shrivastava S."/>
            <person name="Kothari S."/>
            <person name="Dodson R.J."/>
            <person name="Mohamoud Y."/>
            <person name="Khouri H."/>
            <person name="Roesch L.F.W."/>
            <person name="Krogfelt K.A."/>
            <person name="Struve C."/>
            <person name="Triplett E.W."/>
            <person name="Methe B.A."/>
        </authorList>
    </citation>
    <scope>NUCLEOTIDE SEQUENCE [LARGE SCALE GENOMIC DNA]</scope>
    <source>
        <strain>342</strain>
    </source>
</reference>